<comment type="function">
    <text evidence="6 7 13">Cell surface glycoprotein that plays a role in cell adhesion, intracellular signaling and tumor progression (PubMed:10864933, PubMed:10910050, PubMed:2803308). Mediates homophilic and heterophilic cell adhesion with other carcinoembryonic antigen-related cell adhesion molecules, such as CEACAM6 (PubMed:2803308). Plays a role as an oncogene by promoting tumor progression; induces resistance to anoikis of colorectal carcinoma cells (PubMed:10910050).</text>
</comment>
<comment type="function">
    <text evidence="9">(Microbial infection) Receptor for E.coli Dr adhesins. Binding of E.coli Dr adhesins leads to dissociation of the homodimer.</text>
</comment>
<comment type="subunit">
    <text evidence="9 12">Homodimer.</text>
</comment>
<comment type="interaction">
    <interactant intactId="EBI-3914938">
        <id>P06731</id>
    </interactant>
    <interactant intactId="EBI-3914938">
        <id>P06731</id>
        <label>CEACAM5</label>
    </interactant>
    <organismsDiffer>false</organismsDiffer>
    <experiments>7</experiments>
</comment>
<comment type="interaction">
    <interactant intactId="EBI-3914938">
        <id>P06731</id>
    </interactant>
    <interactant intactId="EBI-16040613">
        <id>K0BRG7</id>
        <label>S</label>
    </interactant>
    <organismsDiffer>true</organismsDiffer>
    <experiments>4</experiments>
</comment>
<comment type="subcellular location">
    <subcellularLocation>
        <location evidence="6 9 11">Cell membrane</location>
        <topology evidence="6 9 11">Lipid-anchor</topology>
        <topology evidence="6 9 11">GPI-anchor</topology>
    </subcellularLocation>
    <subcellularLocation>
        <location evidence="5">Apical cell membrane</location>
    </subcellularLocation>
    <subcellularLocation>
        <location evidence="11 13">Cell surface</location>
    </subcellularLocation>
    <text evidence="5">Localized to the apical glycocalyx surface.</text>
</comment>
<comment type="alternative products">
    <event type="alternative splicing"/>
    <isoform>
        <id>P06731-1</id>
        <name>1</name>
        <sequence type="displayed"/>
    </isoform>
    <isoform>
        <id>P06731-2</id>
        <name>2</name>
        <sequence type="described" ref="VSP_053414"/>
    </isoform>
</comment>
<comment type="tissue specificity">
    <text evidence="5">Expressed in columnar epithelial and goblet cells of the colon (at protein level) (PubMed:10436421). Found in adenocarcinomas of endodermally derived digestive system epithelium and fetal colon.</text>
</comment>
<comment type="PTM">
    <text>Complex immunoreactive glycoprotein with a MW of 180 kDa comprising 60% carbohydrate.</text>
</comment>
<comment type="similarity">
    <text evidence="16">Belongs to the immunoglobulin superfamily. CEA family.</text>
</comment>
<comment type="sequence caution" evidence="16">
    <conflict type="frameshift">
        <sequence resource="EMBL-CDS" id="AAA62835"/>
    </conflict>
</comment>
<dbReference type="EMBL" id="M17303">
    <property type="protein sequence ID" value="AAB59513.1"/>
    <property type="molecule type" value="Genomic_DNA"/>
</dbReference>
<dbReference type="EMBL" id="M29540">
    <property type="protein sequence ID" value="AAA51967.1"/>
    <property type="molecule type" value="mRNA"/>
</dbReference>
<dbReference type="EMBL" id="M59262">
    <property type="protein sequence ID" value="AAA62835.1"/>
    <property type="status" value="ALT_FRAME"/>
    <property type="molecule type" value="Genomic_DNA"/>
</dbReference>
<dbReference type="EMBL" id="M59255">
    <property type="protein sequence ID" value="AAA62835.1"/>
    <property type="status" value="JOINED"/>
    <property type="molecule type" value="Genomic_DNA"/>
</dbReference>
<dbReference type="EMBL" id="M59256">
    <property type="protein sequence ID" value="AAA62835.1"/>
    <property type="status" value="JOINED"/>
    <property type="molecule type" value="Genomic_DNA"/>
</dbReference>
<dbReference type="EMBL" id="M59257">
    <property type="protein sequence ID" value="AAA62835.1"/>
    <property type="status" value="JOINED"/>
    <property type="molecule type" value="Genomic_DNA"/>
</dbReference>
<dbReference type="EMBL" id="M59258">
    <property type="protein sequence ID" value="AAA62835.1"/>
    <property type="status" value="JOINED"/>
    <property type="molecule type" value="Genomic_DNA"/>
</dbReference>
<dbReference type="EMBL" id="M59259">
    <property type="protein sequence ID" value="AAA62835.1"/>
    <property type="status" value="JOINED"/>
    <property type="molecule type" value="Genomic_DNA"/>
</dbReference>
<dbReference type="EMBL" id="M59260">
    <property type="protein sequence ID" value="AAA62835.1"/>
    <property type="status" value="JOINED"/>
    <property type="molecule type" value="Genomic_DNA"/>
</dbReference>
<dbReference type="EMBL" id="M59261">
    <property type="protein sequence ID" value="AAA62835.1"/>
    <property type="status" value="JOINED"/>
    <property type="molecule type" value="Genomic_DNA"/>
</dbReference>
<dbReference type="EMBL" id="M59709">
    <property type="status" value="NOT_ANNOTATED_CDS"/>
    <property type="molecule type" value="Genomic_DNA"/>
</dbReference>
<dbReference type="EMBL" id="M59710">
    <property type="status" value="NOT_ANNOTATED_CDS"/>
    <property type="molecule type" value="Genomic_DNA"/>
</dbReference>
<dbReference type="EMBL" id="AC243967">
    <property type="status" value="NOT_ANNOTATED_CDS"/>
    <property type="molecule type" value="Genomic_DNA"/>
</dbReference>
<dbReference type="EMBL" id="X16455">
    <property type="protein sequence ID" value="CAA34474.1"/>
    <property type="molecule type" value="mRNA"/>
</dbReference>
<dbReference type="EMBL" id="M15042">
    <property type="protein sequence ID" value="AAA51963.1"/>
    <property type="molecule type" value="mRNA"/>
</dbReference>
<dbReference type="EMBL" id="M16234">
    <property type="protein sequence ID" value="AAA51972.1"/>
    <property type="molecule type" value="mRNA"/>
</dbReference>
<dbReference type="CCDS" id="CCDS12584.1">
    <molecule id="P06731-1"/>
</dbReference>
<dbReference type="CCDS" id="CCDS77302.1">
    <molecule id="P06731-2"/>
</dbReference>
<dbReference type="PIR" id="A36319">
    <property type="entry name" value="A36319"/>
</dbReference>
<dbReference type="RefSeq" id="NP_001278413.1">
    <molecule id="P06731-1"/>
    <property type="nucleotide sequence ID" value="NM_001291484.3"/>
</dbReference>
<dbReference type="RefSeq" id="NP_001295327.1">
    <molecule id="P06731-2"/>
    <property type="nucleotide sequence ID" value="NM_001308398.2"/>
</dbReference>
<dbReference type="RefSeq" id="NP_004354.3">
    <molecule id="P06731-1"/>
    <property type="nucleotide sequence ID" value="NM_004363.6"/>
</dbReference>
<dbReference type="RefSeq" id="XP_016881634.1">
    <molecule id="P06731-2"/>
    <property type="nucleotide sequence ID" value="XM_017026145.3"/>
</dbReference>
<dbReference type="RefSeq" id="XP_054175511.1">
    <molecule id="P06731-2"/>
    <property type="nucleotide sequence ID" value="XM_054319536.1"/>
</dbReference>
<dbReference type="PDB" id="1E07">
    <property type="method" value="X-ray"/>
    <property type="chains" value="A=35-676"/>
</dbReference>
<dbReference type="PDB" id="2QSQ">
    <property type="method" value="X-ray"/>
    <property type="resolution" value="1.95 A"/>
    <property type="chains" value="A/B=34-144"/>
</dbReference>
<dbReference type="PDB" id="2QST">
    <property type="method" value="X-ray"/>
    <property type="resolution" value="2.90 A"/>
    <property type="chains" value="A/B=34-144"/>
</dbReference>
<dbReference type="PDB" id="2VER">
    <property type="method" value="NMR"/>
    <property type="chains" value="N=35-144"/>
</dbReference>
<dbReference type="PDB" id="8BW0">
    <property type="method" value="EM"/>
    <property type="resolution" value="3.11 A"/>
    <property type="chains" value="C=499-685"/>
</dbReference>
<dbReference type="PDBsum" id="1E07"/>
<dbReference type="PDBsum" id="2QSQ"/>
<dbReference type="PDBsum" id="2QST"/>
<dbReference type="PDBsum" id="2VER"/>
<dbReference type="PDBsum" id="8BW0"/>
<dbReference type="EMDB" id="EMD-16279"/>
<dbReference type="SMR" id="P06731"/>
<dbReference type="BioGRID" id="107478">
    <property type="interactions" value="16"/>
</dbReference>
<dbReference type="DIP" id="DIP-57769N"/>
<dbReference type="FunCoup" id="P06731">
    <property type="interactions" value="69"/>
</dbReference>
<dbReference type="IntAct" id="P06731">
    <property type="interactions" value="9"/>
</dbReference>
<dbReference type="MINT" id="P06731"/>
<dbReference type="STRING" id="9606.ENSP00000221992"/>
<dbReference type="ChEMBL" id="CHEMBL3712881"/>
<dbReference type="DrugBank" id="DB05097">
    <property type="generic name" value="Labetuzumab"/>
</dbReference>
<dbReference type="DrugBank" id="DB08217">
    <property type="generic name" value="S-[(1-Hydroxy-2,2,5,5-tetramethyl-2,5-dihydro-1H-pyrrol-3-yl)methyl] methanesulfonothioate"/>
</dbReference>
<dbReference type="GlyConnect" id="1071">
    <property type="glycosylation" value="257 N-Linked glycans (15 sites)"/>
</dbReference>
<dbReference type="GlyCosmos" id="P06731">
    <property type="glycosylation" value="28 sites, 156 glycans"/>
</dbReference>
<dbReference type="GlyGen" id="P06731">
    <property type="glycosylation" value="29 sites, 7 N-linked glycans (6 sites), 2 N-linked;o-linked glycans (7 sites)"/>
</dbReference>
<dbReference type="iPTMnet" id="P06731"/>
<dbReference type="PhosphoSitePlus" id="P06731"/>
<dbReference type="BioMuta" id="CEACAM5"/>
<dbReference type="DMDM" id="317373456"/>
<dbReference type="jPOST" id="P06731"/>
<dbReference type="MassIVE" id="P06731"/>
<dbReference type="PaxDb" id="9606-ENSP00000221992"/>
<dbReference type="PeptideAtlas" id="P06731"/>
<dbReference type="PRIDE" id="P06731"/>
<dbReference type="ProteomicsDB" id="46254"/>
<dbReference type="ProteomicsDB" id="51917">
    <molecule id="P06731-1"/>
</dbReference>
<dbReference type="ABCD" id="P06731">
    <property type="antibodies" value="42 sequenced antibodies"/>
</dbReference>
<dbReference type="Antibodypedia" id="3500">
    <property type="antibodies" value="3858 antibodies from 56 providers"/>
</dbReference>
<dbReference type="DNASU" id="1048"/>
<dbReference type="Ensembl" id="ENST00000221992.11">
    <molecule id="P06731-1"/>
    <property type="protein sequence ID" value="ENSP00000221992.5"/>
    <property type="gene ID" value="ENSG00000105388.17"/>
</dbReference>
<dbReference type="Ensembl" id="ENST00000398599.8">
    <molecule id="P06731-2"/>
    <property type="protein sequence ID" value="ENSP00000381600.4"/>
    <property type="gene ID" value="ENSG00000105388.17"/>
</dbReference>
<dbReference type="Ensembl" id="ENST00000405816.5">
    <molecule id="P06731-1"/>
    <property type="protein sequence ID" value="ENSP00000385072.1"/>
    <property type="gene ID" value="ENSG00000105388.17"/>
</dbReference>
<dbReference type="Ensembl" id="ENST00000617332.4">
    <molecule id="P06731-1"/>
    <property type="protein sequence ID" value="ENSP00000482303.1"/>
    <property type="gene ID" value="ENSG00000105388.17"/>
</dbReference>
<dbReference type="GeneID" id="1048"/>
<dbReference type="KEGG" id="hsa:1048"/>
<dbReference type="MANE-Select" id="ENST00000221992.11">
    <property type="protein sequence ID" value="ENSP00000221992.5"/>
    <property type="RefSeq nucleotide sequence ID" value="NM_004363.6"/>
    <property type="RefSeq protein sequence ID" value="NP_004354.3"/>
</dbReference>
<dbReference type="UCSC" id="uc002orj.2">
    <molecule id="P06731-1"/>
    <property type="organism name" value="human"/>
</dbReference>
<dbReference type="AGR" id="HGNC:1817"/>
<dbReference type="CTD" id="1048"/>
<dbReference type="DisGeNET" id="1048"/>
<dbReference type="GeneCards" id="CEACAM5"/>
<dbReference type="HGNC" id="HGNC:1817">
    <property type="gene designation" value="CEACAM5"/>
</dbReference>
<dbReference type="HPA" id="ENSG00000105388">
    <property type="expression patterns" value="Tissue enriched (intestine)"/>
</dbReference>
<dbReference type="MIM" id="114890">
    <property type="type" value="gene"/>
</dbReference>
<dbReference type="neXtProt" id="NX_P06731"/>
<dbReference type="OpenTargets" id="ENSG00000105388"/>
<dbReference type="PharmGKB" id="PA26361"/>
<dbReference type="VEuPathDB" id="HostDB:ENSG00000105388"/>
<dbReference type="eggNOG" id="ENOG502RXPD">
    <property type="taxonomic scope" value="Eukaryota"/>
</dbReference>
<dbReference type="GeneTree" id="ENSGT01100000263479"/>
<dbReference type="HOGENOM" id="CLU_024555_7_0_1"/>
<dbReference type="InParanoid" id="P06731"/>
<dbReference type="OMA" id="AIYECET"/>
<dbReference type="OrthoDB" id="6159398at2759"/>
<dbReference type="PAN-GO" id="P06731">
    <property type="GO annotations" value="2 GO annotations based on evolutionary models"/>
</dbReference>
<dbReference type="PhylomeDB" id="P06731"/>
<dbReference type="TreeFam" id="TF336859"/>
<dbReference type="PathwayCommons" id="P06731"/>
<dbReference type="Reactome" id="R-HSA-163125">
    <property type="pathway name" value="Post-translational modification: synthesis of GPI-anchored proteins"/>
</dbReference>
<dbReference type="Reactome" id="R-HSA-202733">
    <property type="pathway name" value="Cell surface interactions at the vascular wall"/>
</dbReference>
<dbReference type="SignaLink" id="P06731"/>
<dbReference type="BioGRID-ORCS" id="1048">
    <property type="hits" value="25 hits in 1152 CRISPR screens"/>
</dbReference>
<dbReference type="ChiTaRS" id="CEACAM5">
    <property type="organism name" value="human"/>
</dbReference>
<dbReference type="EvolutionaryTrace" id="P06731"/>
<dbReference type="GeneWiki" id="CEACAM5"/>
<dbReference type="GenomeRNAi" id="1048"/>
<dbReference type="Pharos" id="P06731">
    <property type="development level" value="Tbio"/>
</dbReference>
<dbReference type="PRO" id="PR:P06731"/>
<dbReference type="Proteomes" id="UP000005640">
    <property type="component" value="Chromosome 19"/>
</dbReference>
<dbReference type="RNAct" id="P06731">
    <property type="molecule type" value="protein"/>
</dbReference>
<dbReference type="Bgee" id="ENSG00000105388">
    <property type="expression patterns" value="Expressed in ileal mucosa and 126 other cell types or tissues"/>
</dbReference>
<dbReference type="ExpressionAtlas" id="P06731">
    <property type="expression patterns" value="baseline and differential"/>
</dbReference>
<dbReference type="GO" id="GO:0016324">
    <property type="term" value="C:apical plasma membrane"/>
    <property type="evidence" value="ECO:0000314"/>
    <property type="project" value="UniProtKB"/>
</dbReference>
<dbReference type="GO" id="GO:0016323">
    <property type="term" value="C:basolateral plasma membrane"/>
    <property type="evidence" value="ECO:0000314"/>
    <property type="project" value="UniProtKB"/>
</dbReference>
<dbReference type="GO" id="GO:0009986">
    <property type="term" value="C:cell surface"/>
    <property type="evidence" value="ECO:0000314"/>
    <property type="project" value="UniProtKB"/>
</dbReference>
<dbReference type="GO" id="GO:0070062">
    <property type="term" value="C:extracellular exosome"/>
    <property type="evidence" value="ECO:0007005"/>
    <property type="project" value="UniProtKB"/>
</dbReference>
<dbReference type="GO" id="GO:0005576">
    <property type="term" value="C:extracellular region"/>
    <property type="evidence" value="ECO:0000304"/>
    <property type="project" value="Reactome"/>
</dbReference>
<dbReference type="GO" id="GO:0016020">
    <property type="term" value="C:membrane"/>
    <property type="evidence" value="ECO:0000314"/>
    <property type="project" value="UniProtKB"/>
</dbReference>
<dbReference type="GO" id="GO:0005886">
    <property type="term" value="C:plasma membrane"/>
    <property type="evidence" value="ECO:0000314"/>
    <property type="project" value="HPA"/>
</dbReference>
<dbReference type="GO" id="GO:0098552">
    <property type="term" value="C:side of membrane"/>
    <property type="evidence" value="ECO:0007669"/>
    <property type="project" value="UniProtKB-KW"/>
</dbReference>
<dbReference type="GO" id="GO:0034235">
    <property type="term" value="F:GPI anchor binding"/>
    <property type="evidence" value="ECO:0000315"/>
    <property type="project" value="UniProtKB"/>
</dbReference>
<dbReference type="GO" id="GO:0042802">
    <property type="term" value="F:identical protein binding"/>
    <property type="evidence" value="ECO:0000314"/>
    <property type="project" value="UniProtKB"/>
</dbReference>
<dbReference type="GO" id="GO:0042803">
    <property type="term" value="F:protein homodimerization activity"/>
    <property type="evidence" value="ECO:0000314"/>
    <property type="project" value="UniProtKB"/>
</dbReference>
<dbReference type="GO" id="GO:0006915">
    <property type="term" value="P:apoptotic process"/>
    <property type="evidence" value="ECO:0007669"/>
    <property type="project" value="UniProtKB-KW"/>
</dbReference>
<dbReference type="GO" id="GO:0007157">
    <property type="term" value="P:heterophilic cell-cell adhesion via plasma membrane cell adhesion molecules"/>
    <property type="evidence" value="ECO:0000315"/>
    <property type="project" value="UniProtKB"/>
</dbReference>
<dbReference type="GO" id="GO:0007156">
    <property type="term" value="P:homophilic cell adhesion via plasma membrane adhesion molecules"/>
    <property type="evidence" value="ECO:0000315"/>
    <property type="project" value="UniProtKB"/>
</dbReference>
<dbReference type="GO" id="GO:0034109">
    <property type="term" value="P:homotypic cell-cell adhesion"/>
    <property type="evidence" value="ECO:0000314"/>
    <property type="project" value="UniProtKB"/>
</dbReference>
<dbReference type="GO" id="GO:2000811">
    <property type="term" value="P:negative regulation of anoikis"/>
    <property type="evidence" value="ECO:0000314"/>
    <property type="project" value="UniProtKB"/>
</dbReference>
<dbReference type="GO" id="GO:0043066">
    <property type="term" value="P:negative regulation of apoptotic process"/>
    <property type="evidence" value="ECO:0000314"/>
    <property type="project" value="UniProtKB"/>
</dbReference>
<dbReference type="GO" id="GO:0010832">
    <property type="term" value="P:negative regulation of myotube differentiation"/>
    <property type="evidence" value="ECO:0000314"/>
    <property type="project" value="UniProtKB"/>
</dbReference>
<dbReference type="CDD" id="cd20948">
    <property type="entry name" value="IgC2_CEACAM5-like"/>
    <property type="match status" value="3"/>
</dbReference>
<dbReference type="CDD" id="cd05740">
    <property type="entry name" value="IgI_hCEACAM_2_4_6_like"/>
    <property type="match status" value="3"/>
</dbReference>
<dbReference type="CDD" id="cd05774">
    <property type="entry name" value="IgV_CEACAM_D1"/>
    <property type="match status" value="1"/>
</dbReference>
<dbReference type="FunFam" id="2.60.40.10:FF:000340">
    <property type="entry name" value="Carcinoembryonic antigen-related cell adhesion molecule 1"/>
    <property type="match status" value="1"/>
</dbReference>
<dbReference type="FunFam" id="2.60.40.10:FF:000517">
    <property type="entry name" value="Carcinoembryonic antigen-related cell adhesion molecule 1"/>
    <property type="match status" value="2"/>
</dbReference>
<dbReference type="FunFam" id="2.60.40.10:FF:000244">
    <property type="entry name" value="carcinoembryonic antigen-related cell adhesion molecule 16"/>
    <property type="match status" value="3"/>
</dbReference>
<dbReference type="Gene3D" id="2.60.40.10">
    <property type="entry name" value="Immunoglobulins"/>
    <property type="match status" value="7"/>
</dbReference>
<dbReference type="InterPro" id="IPR050831">
    <property type="entry name" value="CEA_cell_adhesion"/>
</dbReference>
<dbReference type="InterPro" id="IPR007110">
    <property type="entry name" value="Ig-like_dom"/>
</dbReference>
<dbReference type="InterPro" id="IPR036179">
    <property type="entry name" value="Ig-like_dom_sf"/>
</dbReference>
<dbReference type="InterPro" id="IPR013783">
    <property type="entry name" value="Ig-like_fold"/>
</dbReference>
<dbReference type="InterPro" id="IPR003599">
    <property type="entry name" value="Ig_sub"/>
</dbReference>
<dbReference type="InterPro" id="IPR003598">
    <property type="entry name" value="Ig_sub2"/>
</dbReference>
<dbReference type="InterPro" id="IPR013106">
    <property type="entry name" value="Ig_V-set"/>
</dbReference>
<dbReference type="PANTHER" id="PTHR44427">
    <property type="entry name" value="CARCINOEMBRYONIC ANTIGEN-RELATED CELL ADHESION MOLECULE 19"/>
    <property type="match status" value="1"/>
</dbReference>
<dbReference type="PANTHER" id="PTHR44427:SF20">
    <property type="entry name" value="CEA CELL ADHESION MOLECULE 8"/>
    <property type="match status" value="1"/>
</dbReference>
<dbReference type="Pfam" id="PF13895">
    <property type="entry name" value="Ig_2"/>
    <property type="match status" value="2"/>
</dbReference>
<dbReference type="Pfam" id="PF13927">
    <property type="entry name" value="Ig_3"/>
    <property type="match status" value="4"/>
</dbReference>
<dbReference type="Pfam" id="PF07686">
    <property type="entry name" value="V-set"/>
    <property type="match status" value="1"/>
</dbReference>
<dbReference type="SMART" id="SM00409">
    <property type="entry name" value="IG"/>
    <property type="match status" value="7"/>
</dbReference>
<dbReference type="SMART" id="SM00408">
    <property type="entry name" value="IGc2"/>
    <property type="match status" value="6"/>
</dbReference>
<dbReference type="SUPFAM" id="SSF48726">
    <property type="entry name" value="Immunoglobulin"/>
    <property type="match status" value="7"/>
</dbReference>
<dbReference type="PROSITE" id="PS50835">
    <property type="entry name" value="IG_LIKE"/>
    <property type="match status" value="6"/>
</dbReference>
<gene>
    <name evidence="17" type="primary">CEACAM5</name>
    <name evidence="14" type="synonym">CEA</name>
</gene>
<protein>
    <recommendedName>
        <fullName evidence="16">Cell adhesion molecule CEACAM5</fullName>
    </recommendedName>
    <alternativeName>
        <fullName evidence="14">Carcinoembryonic antigen</fullName>
        <shortName evidence="14">CEA</shortName>
    </alternativeName>
    <alternativeName>
        <fullName>Carcinoembryonic antigen-related cell adhesion molecule 5</fullName>
        <shortName evidence="17">CEA cell adhesion molecule 5</shortName>
    </alternativeName>
    <alternativeName>
        <fullName>Meconium antigen 100</fullName>
    </alternativeName>
    <cdAntigenName>CD66e</cdAntigenName>
</protein>
<organism>
    <name type="scientific">Homo sapiens</name>
    <name type="common">Human</name>
    <dbReference type="NCBI Taxonomy" id="9606"/>
    <lineage>
        <taxon>Eukaryota</taxon>
        <taxon>Metazoa</taxon>
        <taxon>Chordata</taxon>
        <taxon>Craniata</taxon>
        <taxon>Vertebrata</taxon>
        <taxon>Euteleostomi</taxon>
        <taxon>Mammalia</taxon>
        <taxon>Eutheria</taxon>
        <taxon>Euarchontoglires</taxon>
        <taxon>Primates</taxon>
        <taxon>Haplorrhini</taxon>
        <taxon>Catarrhini</taxon>
        <taxon>Hominidae</taxon>
        <taxon>Homo</taxon>
    </lineage>
</organism>
<feature type="signal peptide">
    <location>
        <begin position="1"/>
        <end position="34"/>
    </location>
</feature>
<feature type="chain" id="PRO_0000014566" description="Cell adhesion molecule CEACAM5">
    <location>
        <begin position="35"/>
        <end position="685"/>
    </location>
</feature>
<feature type="propeptide" id="PRO_0000014567" description="Removed in mature form" evidence="2">
    <location>
        <begin position="686"/>
        <end position="702"/>
    </location>
</feature>
<feature type="domain" description="Ig-like V-type" evidence="1">
    <location>
        <begin position="35"/>
        <end position="144"/>
    </location>
</feature>
<feature type="domain" description="Ig-like C2-type 1" evidence="3">
    <location>
        <begin position="145"/>
        <end position="232"/>
    </location>
</feature>
<feature type="domain" description="Ig-like C2-type 2" evidence="3">
    <location>
        <begin position="240"/>
        <end position="315"/>
    </location>
</feature>
<feature type="domain" description="Ig-like C2-type 3" evidence="3">
    <location>
        <begin position="323"/>
        <end position="410"/>
    </location>
</feature>
<feature type="domain" description="Ig-like C2-type 4" evidence="3">
    <location>
        <begin position="418"/>
        <end position="495"/>
    </location>
</feature>
<feature type="domain" description="Ig-like C2-type 5" evidence="3">
    <location>
        <begin position="501"/>
        <end position="588"/>
    </location>
</feature>
<feature type="domain" description="Ig-like C2-type 6" evidence="3">
    <location>
        <begin position="593"/>
        <end position="675"/>
    </location>
</feature>
<feature type="lipid moiety-binding region" description="GPI-anchor amidated alanine" evidence="11">
    <location>
        <position position="685"/>
    </location>
</feature>
<feature type="glycosylation site" description="N-linked (GlcNAc...) asparagine" evidence="4">
    <location>
        <position position="104"/>
    </location>
</feature>
<feature type="glycosylation site" description="N-linked (GlcNAc...) asparagine" evidence="4">
    <location>
        <position position="115"/>
    </location>
</feature>
<feature type="glycosylation site" description="N-linked (GlcNAc...) asparagine" evidence="4">
    <location>
        <position position="152"/>
    </location>
</feature>
<feature type="glycosylation site" description="N-linked (GlcNAc...) asparagine" evidence="4">
    <location>
        <position position="182"/>
    </location>
</feature>
<feature type="glycosylation site" description="N-linked (GlcNAc...) asparagine" evidence="4">
    <location>
        <position position="197"/>
    </location>
</feature>
<feature type="glycosylation site" description="N-linked (GlcNAc...) asparagine" evidence="4">
    <location>
        <position position="204"/>
    </location>
</feature>
<feature type="glycosylation site" description="N-linked (GlcNAc...) asparagine" evidence="4">
    <location>
        <position position="208"/>
    </location>
</feature>
<feature type="glycosylation site" description="N-linked (GlcNAc...) asparagine" evidence="4 10">
    <location>
        <position position="246"/>
    </location>
</feature>
<feature type="glycosylation site" description="N-linked (GlcNAc...) asparagine" evidence="4">
    <location>
        <position position="256"/>
    </location>
</feature>
<feature type="glycosylation site" description="N-linked (GlcNAc...) asparagine" evidence="4">
    <location>
        <position position="274"/>
    </location>
</feature>
<feature type="glycosylation site" description="N-linked (GlcNAc...) asparagine" evidence="4">
    <location>
        <position position="288"/>
    </location>
</feature>
<feature type="glycosylation site" description="N-linked (GlcNAc...) asparagine" evidence="4">
    <location>
        <position position="292"/>
    </location>
</feature>
<feature type="glycosylation site" description="N-linked (GlcNAc...) asparagine" evidence="4">
    <location>
        <position position="309"/>
    </location>
</feature>
<feature type="glycosylation site" description="N-linked (GlcNAc...) asparagine" evidence="4">
    <location>
        <position position="330"/>
    </location>
</feature>
<feature type="glycosylation site" description="N-linked (GlcNAc...) asparagine" evidence="4">
    <location>
        <position position="351"/>
    </location>
</feature>
<feature type="glycosylation site" description="N-linked (GlcNAc...) asparagine" evidence="4">
    <location>
        <position position="360"/>
    </location>
</feature>
<feature type="glycosylation site" description="N-linked (GlcNAc...) asparagine" evidence="4">
    <location>
        <position position="375"/>
    </location>
</feature>
<feature type="glycosylation site" description="N-linked (GlcNAc...) asparagine" evidence="4">
    <location>
        <position position="432"/>
    </location>
</feature>
<feature type="glycosylation site" description="N-linked (GlcNAc...) asparagine" evidence="4">
    <location>
        <position position="466"/>
    </location>
</feature>
<feature type="glycosylation site" description="N-linked (GlcNAc...) asparagine" evidence="4">
    <location>
        <position position="480"/>
    </location>
</feature>
<feature type="glycosylation site" description="N-linked (GlcNAc...) asparagine" evidence="4">
    <location>
        <position position="508"/>
    </location>
</feature>
<feature type="glycosylation site" description="N-linked (GlcNAc...) asparagine" evidence="4">
    <location>
        <position position="529"/>
    </location>
</feature>
<feature type="glycosylation site" description="N-linked (GlcNAc...) asparagine" evidence="4">
    <location>
        <position position="553"/>
    </location>
</feature>
<feature type="glycosylation site" description="N-linked (GlcNAc...) asparagine" evidence="4 8">
    <location>
        <position position="560"/>
    </location>
</feature>
<feature type="glycosylation site" description="N-linked (GlcNAc...) asparagine" evidence="4">
    <location>
        <position position="580"/>
    </location>
</feature>
<feature type="glycosylation site" description="N-linked (GlcNAc...) asparagine" evidence="4">
    <location>
        <position position="612"/>
    </location>
</feature>
<feature type="glycosylation site" description="N-linked (GlcNAc...) asparagine" evidence="4">
    <location>
        <position position="650"/>
    </location>
</feature>
<feature type="glycosylation site" description="N-linked (GlcNAc...) asparagine" evidence="4">
    <location>
        <position position="665"/>
    </location>
</feature>
<feature type="disulfide bond" evidence="3">
    <location>
        <begin position="167"/>
        <end position="215"/>
    </location>
</feature>
<feature type="disulfide bond" evidence="3">
    <location>
        <begin position="259"/>
        <end position="299"/>
    </location>
</feature>
<feature type="disulfide bond" evidence="3">
    <location>
        <begin position="345"/>
        <end position="393"/>
    </location>
</feature>
<feature type="disulfide bond" evidence="3">
    <location>
        <begin position="437"/>
        <end position="477"/>
    </location>
</feature>
<feature type="disulfide bond" evidence="3">
    <location>
        <begin position="523"/>
        <end position="571"/>
    </location>
</feature>
<feature type="disulfide bond" evidence="3">
    <location>
        <begin position="615"/>
        <end position="655"/>
    </location>
</feature>
<feature type="splice variant" id="VSP_053414" description="In isoform 2." evidence="15">
    <location>
        <position position="320"/>
    </location>
</feature>
<feature type="sequence variant" id="VAR_061310" description="In dbSNP:rs12971352.">
    <original>I</original>
    <variation>V</variation>
    <location>
        <position position="80"/>
    </location>
</feature>
<feature type="sequence variant" id="VAR_061311" description="In dbSNP:rs28683503.">
    <original>V</original>
    <variation>A</variation>
    <location>
        <position position="83"/>
    </location>
</feature>
<feature type="sequence variant" id="VAR_056028" description="In dbSNP:rs3815780.">
    <original>Q</original>
    <variation>P</variation>
    <location>
        <position position="137"/>
    </location>
</feature>
<feature type="sequence variant" id="VAR_031091" description="In dbSNP:rs10407503.">
    <original>A</original>
    <variation>D</variation>
    <location>
        <position position="340"/>
    </location>
</feature>
<feature type="sequence variant" id="VAR_024493" description="In dbSNP:rs7249230.">
    <original>E</original>
    <variation>K</variation>
    <location>
        <position position="398"/>
    </location>
</feature>
<feature type="sequence variant" id="VAR_031092" description="In dbSNP:rs10423171.">
    <original>R</original>
    <variation>S</variation>
    <location>
        <position position="664"/>
    </location>
</feature>
<feature type="sequence variant" id="VAR_056029" description="In dbSNP:rs9621.">
    <original>G</original>
    <variation>R</variation>
    <location>
        <position position="678"/>
    </location>
</feature>
<feature type="mutagenesis site" description="No effect on dimerization. Reduced affinity for E.coli Dr adhesins." evidence="9">
    <original>F</original>
    <variation>I</variation>
    <location>
        <position position="63"/>
    </location>
</feature>
<feature type="mutagenesis site" description="Abolishes dimerization. Reduced affinity for E.coli Dr adhesins." evidence="9">
    <original>F</original>
    <variation>R</variation>
    <location>
        <position position="63"/>
    </location>
</feature>
<feature type="mutagenesis site" description="Abolishes dimerization." evidence="6 9">
    <original>S</original>
    <variation>N</variation>
    <location>
        <position position="66"/>
    </location>
</feature>
<feature type="mutagenesis site" description="Abolishes dimerization." evidence="6">
    <original>Y</original>
    <variation>A</variation>
    <location>
        <position position="68"/>
    </location>
</feature>
<feature type="mutagenesis site" description="No effect on dimerization." evidence="6">
    <original>Y</original>
    <variation>F</variation>
    <location>
        <position position="68"/>
    </location>
</feature>
<feature type="mutagenesis site" description="Abolishes dimerization." evidence="6">
    <original>K</original>
    <variation>A</variation>
    <location>
        <position position="69"/>
    </location>
</feature>
<feature type="mutagenesis site" description="Abolishes dimerization." evidence="9">
    <original>V</original>
    <variation>A</variation>
    <location>
        <position position="73"/>
    </location>
</feature>
<feature type="mutagenesis site" description="No effect on dimerization." evidence="9">
    <original>D</original>
    <variation>A</variation>
    <location>
        <position position="74"/>
    </location>
</feature>
<feature type="mutagenesis site" description="Abolishes dimerization." evidence="9">
    <original>D</original>
    <variation>L</variation>
    <variation>R</variation>
    <location>
        <position position="74"/>
    </location>
</feature>
<feature type="mutagenesis site" description="Abolishes dimerization. Reduced affinity for E.coli Dr adhesins." evidence="6 9">
    <original>Q</original>
    <variation>L</variation>
    <variation>R</variation>
    <location>
        <position position="78"/>
    </location>
</feature>
<feature type="mutagenesis site" description="Abolishes dimerization. Reduced affinity for E.coli Dr adhesins." evidence="9">
    <original>I</original>
    <variation>A</variation>
    <location>
        <position position="125"/>
    </location>
</feature>
<feature type="mutagenesis site" description="No effect on dimerization. Reduced affinity for E.coli Dr adhesins." evidence="9">
    <original>L</original>
    <variation>A</variation>
    <variation>C</variation>
    <location>
        <position position="129"/>
    </location>
</feature>
<feature type="mutagenesis site" description="Abolishes dimerization. Reduced affinity for E.coli Dr adhesins." evidence="9">
    <original>L</original>
    <variation>S</variation>
    <location>
        <position position="129"/>
    </location>
</feature>
<feature type="mutagenesis site" description="Abolishes dimerization." evidence="9">
    <original>E</original>
    <variation>A</variation>
    <location>
        <position position="133"/>
    </location>
</feature>
<feature type="sequence conflict" description="In Ref. 3; AAA62835." evidence="16" ref="3">
    <original>F</original>
    <variation>L</variation>
    <location>
        <position position="641"/>
    </location>
</feature>
<feature type="sequence conflict" description="In Ref. 3; AAA62835." evidence="16" ref="3">
    <original>T</original>
    <variation>Q</variation>
    <location>
        <position position="646"/>
    </location>
</feature>
<feature type="sequence conflict" description="In Ref. 3; AAA62835." evidence="16" ref="3">
    <original>V</original>
    <variation>A</variation>
    <location>
        <position position="689"/>
    </location>
</feature>
<feature type="strand" evidence="18">
    <location>
        <begin position="37"/>
        <end position="46"/>
    </location>
</feature>
<feature type="strand" evidence="18">
    <location>
        <begin position="51"/>
        <end position="57"/>
    </location>
</feature>
<feature type="strand" evidence="18">
    <location>
        <begin position="60"/>
        <end position="72"/>
    </location>
</feature>
<feature type="helix" evidence="18">
    <location>
        <begin position="75"/>
        <end position="77"/>
    </location>
</feature>
<feature type="strand" evidence="18">
    <location>
        <begin position="78"/>
        <end position="83"/>
    </location>
</feature>
<feature type="turn" evidence="18">
    <location>
        <begin position="84"/>
        <end position="87"/>
    </location>
</feature>
<feature type="strand" evidence="18">
    <location>
        <begin position="88"/>
        <end position="91"/>
    </location>
</feature>
<feature type="strand" evidence="18">
    <location>
        <begin position="99"/>
        <end position="101"/>
    </location>
</feature>
<feature type="strand" evidence="18">
    <location>
        <begin position="107"/>
        <end position="109"/>
    </location>
</feature>
<feature type="helix" evidence="18">
    <location>
        <begin position="114"/>
        <end position="116"/>
    </location>
</feature>
<feature type="strand" evidence="18">
    <location>
        <begin position="118"/>
        <end position="126"/>
    </location>
</feature>
<feature type="strand" evidence="18">
    <location>
        <begin position="132"/>
        <end position="141"/>
    </location>
</feature>
<feature type="strand" evidence="19">
    <location>
        <begin position="505"/>
        <end position="508"/>
    </location>
</feature>
<feature type="turn" evidence="19">
    <location>
        <begin position="514"/>
        <end position="516"/>
    </location>
</feature>
<feature type="strand" evidence="19">
    <location>
        <begin position="519"/>
        <end position="524"/>
    </location>
</feature>
<feature type="strand" evidence="19">
    <location>
        <begin position="531"/>
        <end position="536"/>
    </location>
</feature>
<feature type="strand" evidence="19">
    <location>
        <begin position="547"/>
        <end position="550"/>
    </location>
</feature>
<feature type="turn" evidence="19">
    <location>
        <begin position="551"/>
        <end position="554"/>
    </location>
</feature>
<feature type="strand" evidence="19">
    <location>
        <begin position="555"/>
        <end position="558"/>
    </location>
</feature>
<feature type="helix" evidence="19">
    <location>
        <begin position="563"/>
        <end position="565"/>
    </location>
</feature>
<feature type="strand" evidence="19">
    <location>
        <begin position="569"/>
        <end position="577"/>
    </location>
</feature>
<feature type="strand" evidence="19">
    <location>
        <begin position="597"/>
        <end position="600"/>
    </location>
</feature>
<feature type="strand" evidence="19">
    <location>
        <begin position="611"/>
        <end position="616"/>
    </location>
</feature>
<feature type="strand" evidence="19">
    <location>
        <begin position="624"/>
        <end position="629"/>
    </location>
</feature>
<feature type="strand" evidence="19">
    <location>
        <begin position="632"/>
        <end position="642"/>
    </location>
</feature>
<feature type="strand" evidence="19">
    <location>
        <begin position="651"/>
        <end position="658"/>
    </location>
</feature>
<feature type="turn" evidence="19">
    <location>
        <begin position="660"/>
        <end position="662"/>
    </location>
</feature>
<feature type="strand" evidence="19">
    <location>
        <begin position="665"/>
        <end position="673"/>
    </location>
</feature>
<name>CEAM5_HUMAN</name>
<accession>P06731</accession>
<accession>H9KVA7</accession>
<sequence length="702" mass="76796">MESPSAPPHRWCIPWQRLLLTASLLTFWNPPTTAKLTIESTPFNVAEGKEVLLLVHNLPQHLFGYSWYKGERVDGNRQIIGYVIGTQQATPGPAYSGREIIYPNASLLIQNIIQNDTGFYTLHVIKSDLVNEEATGQFRVYPELPKPSISSNNSKPVEDKDAVAFTCEPETQDATYLWWVNNQSLPVSPRLQLSNGNRTLTLFNVTRNDTASYKCETQNPVSARRSDSVILNVLYGPDAPTISPLNTSYRSGENLNLSCHAASNPPAQYSWFVNGTFQQSTQELFIPNITVNNSGSYTCQAHNSDTGLNRTTVTTITVYAEPPKPFITSNNSNPVEDEDAVALTCEPEIQNTTYLWWVNNQSLPVSPRLQLSNDNRTLTLLSVTRNDVGPYECGIQNELSVDHSDPVILNVLYGPDDPTISPSYTYYRPGVNLSLSCHAASNPPAQYSWLIDGNIQQHTQELFISNITEKNSGLYTCQANNSASGHSRTTVKTITVSAELPKPSISSNNSKPVEDKDAVAFTCEPEAQNTTYLWWVNGQSLPVSPRLQLSNGNRTLTLFNVTRNDARAYVCGIQNSVSANRSDPVTLDVLYGPDTPIISPPDSSYLSGANLNLSCHSASNPSPQYSWRINGIPQQHTQVLFIAKITPNNNGTYACFVSNLATGRNNSIVKSITVSASGTSPGLSAGATVGIMIGVLVGVALI</sequence>
<proteinExistence type="evidence at protein level"/>
<keyword id="KW-0002">3D-structure</keyword>
<keyword id="KW-0025">Alternative splicing</keyword>
<keyword id="KW-0053">Apoptosis</keyword>
<keyword id="KW-0130">Cell adhesion</keyword>
<keyword id="KW-1003">Cell membrane</keyword>
<keyword id="KW-1015">Disulfide bond</keyword>
<keyword id="KW-0325">Glycoprotein</keyword>
<keyword id="KW-0336">GPI-anchor</keyword>
<keyword id="KW-0393">Immunoglobulin domain</keyword>
<keyword id="KW-0449">Lipoprotein</keyword>
<keyword id="KW-0472">Membrane</keyword>
<keyword id="KW-0553">Oncogene</keyword>
<keyword id="KW-1267">Proteomics identification</keyword>
<keyword id="KW-1185">Reference proteome</keyword>
<keyword id="KW-0677">Repeat</keyword>
<keyword id="KW-0732">Signal</keyword>
<evidence type="ECO:0000250" key="1">
    <source>
        <dbReference type="UniProtKB" id="P31997"/>
    </source>
</evidence>
<evidence type="ECO:0000255" key="2"/>
<evidence type="ECO:0000255" key="3">
    <source>
        <dbReference type="PROSITE-ProRule" id="PRU00114"/>
    </source>
</evidence>
<evidence type="ECO:0000255" key="4">
    <source>
        <dbReference type="PROSITE-ProRule" id="PRU00498"/>
    </source>
</evidence>
<evidence type="ECO:0000269" key="5">
    <source>
    </source>
</evidence>
<evidence type="ECO:0000269" key="6">
    <source>
    </source>
</evidence>
<evidence type="ECO:0000269" key="7">
    <source>
    </source>
</evidence>
<evidence type="ECO:0000269" key="8">
    <source>
    </source>
</evidence>
<evidence type="ECO:0000269" key="9">
    <source>
    </source>
</evidence>
<evidence type="ECO:0000269" key="10">
    <source>
    </source>
</evidence>
<evidence type="ECO:0000269" key="11">
    <source>
    </source>
</evidence>
<evidence type="ECO:0000269" key="12">
    <source>
    </source>
</evidence>
<evidence type="ECO:0000269" key="13">
    <source>
    </source>
</evidence>
<evidence type="ECO:0000303" key="14">
    <source>
    </source>
</evidence>
<evidence type="ECO:0000303" key="15">
    <source>
    </source>
</evidence>
<evidence type="ECO:0000305" key="16"/>
<evidence type="ECO:0000312" key="17">
    <source>
        <dbReference type="HGNC" id="HGNC:1817"/>
    </source>
</evidence>
<evidence type="ECO:0007829" key="18">
    <source>
        <dbReference type="PDB" id="2QSQ"/>
    </source>
</evidence>
<evidence type="ECO:0007829" key="19">
    <source>
        <dbReference type="PDB" id="8BW0"/>
    </source>
</evidence>
<reference key="1">
    <citation type="journal article" date="1987" name="Mol. Cell. Biol.">
        <title>Isolation and characterization of full-length functional cDNA clones for human carcinoembryonic antigen.</title>
        <authorList>
            <person name="Beauchemin N."/>
            <person name="Benchimol S."/>
            <person name="Cournoyer D."/>
            <person name="Fuks A."/>
            <person name="Stanners C.P."/>
        </authorList>
    </citation>
    <scope>NUCLEOTIDE SEQUENCE [GENOMIC DNA]</scope>
</reference>
<reference key="2">
    <citation type="journal article" date="1988" name="Genomics">
        <title>Carcinoembryonic antigen family: characterization of cDNAs coding for NCA and CEA and suggestion of nonrandom sequence variation in their conserved loop-domains.</title>
        <authorList>
            <person name="Barnett T."/>
            <person name="Goebel S.J."/>
            <person name="Nothdurft M.A."/>
            <person name="Elting J.J."/>
        </authorList>
    </citation>
    <scope>NUCLEOTIDE SEQUENCE [MRNA] (ISOFORM 1)</scope>
</reference>
<reference key="3">
    <citation type="journal article" date="1990" name="Mol. Cell. Biol.">
        <title>Cloning of the complete gene for carcinoembryonic antigen: analysis of its promoter indicates a region conveying cell type-specific expression.</title>
        <authorList>
            <person name="Schrewe H."/>
            <person name="Thompson J."/>
            <person name="Bona M."/>
            <person name="Hefta L.J.F."/>
            <person name="Maruya A."/>
            <person name="Hassauer M."/>
            <person name="Shively J.E."/>
            <person name="von Kleist S."/>
            <person name="Zimmermann W."/>
        </authorList>
    </citation>
    <scope>NUCLEOTIDE SEQUENCE [GENOMIC DNA]</scope>
</reference>
<reference key="4">
    <citation type="journal article" date="2004" name="Nature">
        <title>The DNA sequence and biology of human chromosome 19.</title>
        <authorList>
            <person name="Grimwood J."/>
            <person name="Gordon L.A."/>
            <person name="Olsen A.S."/>
            <person name="Terry A."/>
            <person name="Schmutz J."/>
            <person name="Lamerdin J.E."/>
            <person name="Hellsten U."/>
            <person name="Goodstein D."/>
            <person name="Couronne O."/>
            <person name="Tran-Gyamfi M."/>
            <person name="Aerts A."/>
            <person name="Altherr M."/>
            <person name="Ashworth L."/>
            <person name="Bajorek E."/>
            <person name="Black S."/>
            <person name="Branscomb E."/>
            <person name="Caenepeel S."/>
            <person name="Carrano A.V."/>
            <person name="Caoile C."/>
            <person name="Chan Y.M."/>
            <person name="Christensen M."/>
            <person name="Cleland C.A."/>
            <person name="Copeland A."/>
            <person name="Dalin E."/>
            <person name="Dehal P."/>
            <person name="Denys M."/>
            <person name="Detter J.C."/>
            <person name="Escobar J."/>
            <person name="Flowers D."/>
            <person name="Fotopulos D."/>
            <person name="Garcia C."/>
            <person name="Georgescu A.M."/>
            <person name="Glavina T."/>
            <person name="Gomez M."/>
            <person name="Gonzales E."/>
            <person name="Groza M."/>
            <person name="Hammon N."/>
            <person name="Hawkins T."/>
            <person name="Haydu L."/>
            <person name="Ho I."/>
            <person name="Huang W."/>
            <person name="Israni S."/>
            <person name="Jett J."/>
            <person name="Kadner K."/>
            <person name="Kimball H."/>
            <person name="Kobayashi A."/>
            <person name="Larionov V."/>
            <person name="Leem S.-H."/>
            <person name="Lopez F."/>
            <person name="Lou Y."/>
            <person name="Lowry S."/>
            <person name="Malfatti S."/>
            <person name="Martinez D."/>
            <person name="McCready P.M."/>
            <person name="Medina C."/>
            <person name="Morgan J."/>
            <person name="Nelson K."/>
            <person name="Nolan M."/>
            <person name="Ovcharenko I."/>
            <person name="Pitluck S."/>
            <person name="Pollard M."/>
            <person name="Popkie A.P."/>
            <person name="Predki P."/>
            <person name="Quan G."/>
            <person name="Ramirez L."/>
            <person name="Rash S."/>
            <person name="Retterer J."/>
            <person name="Rodriguez A."/>
            <person name="Rogers S."/>
            <person name="Salamov A."/>
            <person name="Salazar A."/>
            <person name="She X."/>
            <person name="Smith D."/>
            <person name="Slezak T."/>
            <person name="Solovyev V."/>
            <person name="Thayer N."/>
            <person name="Tice H."/>
            <person name="Tsai M."/>
            <person name="Ustaszewska A."/>
            <person name="Vo N."/>
            <person name="Wagner M."/>
            <person name="Wheeler J."/>
            <person name="Wu K."/>
            <person name="Xie G."/>
            <person name="Yang J."/>
            <person name="Dubchak I."/>
            <person name="Furey T.S."/>
            <person name="DeJong P."/>
            <person name="Dickson M."/>
            <person name="Gordon D."/>
            <person name="Eichler E.E."/>
            <person name="Pennacchio L.A."/>
            <person name="Richardson P."/>
            <person name="Stubbs L."/>
            <person name="Rokhsar D.S."/>
            <person name="Myers R.M."/>
            <person name="Rubin E.M."/>
            <person name="Lucas S.M."/>
        </authorList>
    </citation>
    <scope>NUCLEOTIDE SEQUENCE [LARGE SCALE GENOMIC DNA]</scope>
</reference>
<reference key="5">
    <citation type="journal article" date="1987" name="Biochem. Biophys. Res. Commun.">
        <title>Primary structure of human carcinoembryonic antigen (CEA) deduced from cDNA sequence.</title>
        <authorList>
            <person name="Oikawa S."/>
            <person name="Nakazato H."/>
            <person name="Kosaki G."/>
        </authorList>
    </citation>
    <scope>NUCLEOTIDE SEQUENCE [MRNA] OF 5-702 (ISOFORM 2)</scope>
</reference>
<reference key="6">
    <citation type="journal article" date="1987" name="Proc. Natl. Acad. Sci. U.S.A.">
        <title>Isolation and characterization of cDNA clones encoding the human carcinoembryonic antigen reveal a highly conserved repeating structure.</title>
        <authorList>
            <person name="Zimmermann W."/>
            <person name="Ortlieb B."/>
            <person name="Friedrich R."/>
            <person name="von Kleist S."/>
        </authorList>
    </citation>
    <scope>NUCLEOTIDE SEQUENCE [MRNA] OF 331-702 (ISOFORM 1)</scope>
</reference>
<reference key="7">
    <citation type="journal article" date="1989" name="Biochem. Biophys. Res. Commun.">
        <title>Cell adhesion activity of non-specific cross-reacting antigen (NCA) and carcinoembryonic antigen (CEA) expressed on CHO cell surface: homophilic and heterophilic adhesion.</title>
        <authorList>
            <person name="Oikawa S."/>
            <person name="Inuzuka C."/>
            <person name="Kuroki M."/>
            <person name="Matsuoka Y."/>
            <person name="Kosaki G."/>
            <person name="Nakazato H."/>
        </authorList>
    </citation>
    <scope>FUNCTION</scope>
    <scope>SUBCELLULAR LOCATION</scope>
</reference>
<reference key="8">
    <citation type="journal article" date="1990" name="Cancer Res.">
        <title>Expression of complementary DNA and genomic clones for carcinoembryonic antigen and nonspecific cross-reacting antigen in Chinese hamster ovary and mouse fibroblast cells and characterization of the membrane-expressed products.</title>
        <authorList>
            <person name="Hefta L.J."/>
            <person name="Schrewe H."/>
            <person name="Thompson J.A."/>
            <person name="Oikawa S."/>
            <person name="Nakazato H."/>
            <person name="Shively J.E."/>
        </authorList>
    </citation>
    <scope>SUBCELLULAR LOCATION</scope>
    <scope>GPI-ANCHOR AT ALA-685</scope>
</reference>
<reference key="9">
    <citation type="journal article" date="1999" name="Tumor Biol.">
        <title>Four carcinoembryonic antigen subfamily members, CEA, NCA, BGP and CGM2, selectively expressed in the normal human colonic epithelium, are integral components of the fuzzy coat.</title>
        <authorList>
            <person name="Fraengsmyr L."/>
            <person name="Baranov V."/>
            <person name="Hammarstroem S."/>
        </authorList>
    </citation>
    <scope>SUBCELLULAR LOCATION</scope>
    <scope>TISSUE SPECIFICITY</scope>
</reference>
<reference key="10">
    <citation type="journal article" date="2000" name="Cancer Res.">
        <title>Human carcinoembryonic antigen functions as a general inhibitor of anoikis.</title>
        <authorList>
            <person name="Ordonez C."/>
            <person name="Screaton R.A."/>
            <person name="Ilantzis C."/>
            <person name="Stanners C.P."/>
        </authorList>
    </citation>
    <scope>FUNCTION</scope>
</reference>
<reference key="11">
    <citation type="journal article" date="2000" name="J. Biol. Chem.">
        <title>Self recognition in the Ig superfamily. Identification of precise subdomains in carcinoembryonic antigen required for intercellular adhesion.</title>
        <authorList>
            <person name="Taheri M."/>
            <person name="Saragovi U."/>
            <person name="Fuks A."/>
            <person name="Makkerh J."/>
            <person name="Mort J."/>
            <person name="Stanners C.P."/>
        </authorList>
    </citation>
    <scope>FUNCTION</scope>
    <scope>MUTAGENESIS OF SER-66; TYR-68; LYS-69 AND GLN-78</scope>
    <scope>SUBCELLULAR LOCATION</scope>
</reference>
<reference key="12">
    <citation type="journal article" date="2006" name="J. Proteome Res.">
        <title>Identification of N-linked glycoproteins in human saliva by glycoprotein capture and mass spectrometry.</title>
        <authorList>
            <person name="Ramachandran P."/>
            <person name="Boontheung P."/>
            <person name="Xie Y."/>
            <person name="Sondej M."/>
            <person name="Wong D.T."/>
            <person name="Loo J.A."/>
        </authorList>
    </citation>
    <scope>GLYCOSYLATION [LARGE SCALE ANALYSIS] AT ASN-560</scope>
    <source>
        <tissue>Saliva</tissue>
    </source>
</reference>
<reference key="13">
    <citation type="journal article" date="2009" name="J. Proteome Res.">
        <title>Glycoproteomics analysis of human liver tissue by combination of multiple enzyme digestion and hydrazide chemistry.</title>
        <authorList>
            <person name="Chen R."/>
            <person name="Jiang X."/>
            <person name="Sun D."/>
            <person name="Han G."/>
            <person name="Wang F."/>
            <person name="Ye M."/>
            <person name="Wang L."/>
            <person name="Zou H."/>
        </authorList>
    </citation>
    <scope>GLYCOSYLATION [LARGE SCALE ANALYSIS] AT ASN-246</scope>
    <source>
        <tissue>Liver</tissue>
    </source>
</reference>
<reference key="14">
    <citation type="journal article" date="2015" name="Proc. Natl. Acad. Sci. U.S.A.">
        <title>Diverse oligomeric states of CEACAM IgV domains.</title>
        <authorList>
            <person name="Bonsor D.A."/>
            <person name="Gunther S."/>
            <person name="Beadenkopf R."/>
            <person name="Beckett D."/>
            <person name="Sundberg E.J."/>
        </authorList>
    </citation>
    <scope>SUBUNIT</scope>
</reference>
<reference key="15">
    <citation type="journal article" date="2000" name="FEBS Lett.">
        <title>Structural models for carcinoembryonic antigen and its complex with the single-chain Fv antibody molecule MFE23.</title>
        <authorList>
            <person name="Boehm M.K."/>
            <person name="Perkins S.J."/>
        </authorList>
    </citation>
    <scope>3D-STRUCTURE MODELING OF 35-676</scope>
</reference>
<reference key="16">
    <citation type="journal article" date="2008" name="Mol. Microbiol.">
        <title>Binding of Dr adhesins of Escherichia coli to carcinoembryonic antigen triggers receptor dissociation.</title>
        <authorList>
            <person name="Korotkova N."/>
            <person name="Yang Y."/>
            <person name="Le Trong I."/>
            <person name="Cota E."/>
            <person name="Demeler B."/>
            <person name="Marchant J."/>
            <person name="Thomas W.E."/>
            <person name="Stenkamp R.E."/>
            <person name="Moseley S.L."/>
            <person name="Matthews S."/>
        </authorList>
    </citation>
    <scope>X-RAY CRYSTALLOGRAPHY (1.95 ANGSTROMS) OF 34-144 IN COMPLEX WITH E.COLI DR ADHESIN</scope>
    <scope>FUNCTION (MICROBIAL INFECTION)</scope>
    <scope>SUBUNIT</scope>
    <scope>SUBCELLULAR LOCATION</scope>
    <scope>MUTAGENESIS OF PHE-63; SER-66; VAL-73; ASP-74; GLN-78; ILE-125; LEU-129 AND GLU-133</scope>
</reference>